<comment type="function">
    <text evidence="1">Required for accurate and efficient protein synthesis under certain stress conditions. May act as a fidelity factor of the translation reaction, by catalyzing a one-codon backward translocation of tRNAs on improperly translocated ribosomes. Back-translocation proceeds from a post-translocation (POST) complex to a pre-translocation (PRE) complex, thus giving elongation factor G a second chance to translocate the tRNAs correctly. Binds to ribosomes in a GTP-dependent manner.</text>
</comment>
<comment type="catalytic activity">
    <reaction evidence="1">
        <text>GTP + H2O = GDP + phosphate + H(+)</text>
        <dbReference type="Rhea" id="RHEA:19669"/>
        <dbReference type="ChEBI" id="CHEBI:15377"/>
        <dbReference type="ChEBI" id="CHEBI:15378"/>
        <dbReference type="ChEBI" id="CHEBI:37565"/>
        <dbReference type="ChEBI" id="CHEBI:43474"/>
        <dbReference type="ChEBI" id="CHEBI:58189"/>
        <dbReference type="EC" id="3.6.5.n1"/>
    </reaction>
</comment>
<comment type="subcellular location">
    <subcellularLocation>
        <location evidence="1">Cell inner membrane</location>
        <topology evidence="1">Peripheral membrane protein</topology>
        <orientation evidence="1">Cytoplasmic side</orientation>
    </subcellularLocation>
</comment>
<comment type="similarity">
    <text evidence="1">Belongs to the TRAFAC class translation factor GTPase superfamily. Classic translation factor GTPase family. LepA subfamily.</text>
</comment>
<comment type="sequence caution" evidence="2">
    <conflict type="erroneous initiation">
        <sequence resource="EMBL-CDS" id="AAO91002"/>
    </conflict>
</comment>
<sequence length="602" mass="66481">MTTISQKFIRNFSIIAHIDHGKSTLADRFIQLCGGLSEREMKAQVLDSMDIERERGITIKAQSVTLNFKSQDGHFYQLNFIDTPGHVDFSYEVSRSLAACEGALLVVDAAQGVEAQTVATCYTAIEQGLVVLPVLNKIDLPQADPERAIQEIEDVIGIEAHDAIRVSAKEGRGVKELLEQLVVAIPPPVGDPEAPLQALIIDSWFDSYLGVVSLVRVKAGTLRKGDKIRVMSTGKDYYADQIGHFTPKRQPLEELSAGAVGFVVAGIKDIFGAPVGDTLTHAKQSAGSPLPGFKQVKPQVFAGLFPINSEEYEPFREALAKLRLNDAALFYEPESSEALGFGFRCGFLGMLHMEIVQERLEREYNLELITTAPTVSYEILAKQGEMLYVDNPSHLPEPGKIGEIREPIAVANILVPPTYLGAVITLCVEKRGVQKKLLYLSNQVSMTYEIPLSEVVLDFFDRLKSASRGYASLDYSFNHFQAADLVKLDILISGQKVDALATIVHRDLAYTRGRELTERLKDLIPRQMFEVAIQAAIGAKIIARTSVKALRKNVTAKCYGGDITRKRKLLEKQKAGKKRMKQVGKVAIPQEAFLAVLRVKNE</sequence>
<keyword id="KW-0997">Cell inner membrane</keyword>
<keyword id="KW-1003">Cell membrane</keyword>
<keyword id="KW-0342">GTP-binding</keyword>
<keyword id="KW-0378">Hydrolase</keyword>
<keyword id="KW-0472">Membrane</keyword>
<keyword id="KW-0547">Nucleotide-binding</keyword>
<keyword id="KW-0648">Protein biosynthesis</keyword>
<keyword id="KW-1185">Reference proteome</keyword>
<dbReference type="EC" id="3.6.5.n1" evidence="1"/>
<dbReference type="EMBL" id="AE016828">
    <property type="protein sequence ID" value="AAO91002.1"/>
    <property type="status" value="ALT_INIT"/>
    <property type="molecule type" value="Genomic_DNA"/>
</dbReference>
<dbReference type="RefSeq" id="NP_820488.1">
    <property type="nucleotide sequence ID" value="NC_002971.3"/>
</dbReference>
<dbReference type="RefSeq" id="WP_010958269.1">
    <property type="nucleotide sequence ID" value="NC_002971.4"/>
</dbReference>
<dbReference type="SMR" id="Q83BK3"/>
<dbReference type="STRING" id="227377.CBU_1505"/>
<dbReference type="EnsemblBacteria" id="AAO91002">
    <property type="protein sequence ID" value="AAO91002"/>
    <property type="gene ID" value="CBU_1505"/>
</dbReference>
<dbReference type="GeneID" id="1209415"/>
<dbReference type="KEGG" id="cbu:CBU_1505"/>
<dbReference type="PATRIC" id="fig|227377.7.peg.1507"/>
<dbReference type="eggNOG" id="COG0481">
    <property type="taxonomic scope" value="Bacteria"/>
</dbReference>
<dbReference type="HOGENOM" id="CLU_009995_3_3_6"/>
<dbReference type="OrthoDB" id="9804431at2"/>
<dbReference type="Proteomes" id="UP000002671">
    <property type="component" value="Chromosome"/>
</dbReference>
<dbReference type="GO" id="GO:0005886">
    <property type="term" value="C:plasma membrane"/>
    <property type="evidence" value="ECO:0007669"/>
    <property type="project" value="UniProtKB-SubCell"/>
</dbReference>
<dbReference type="GO" id="GO:0005525">
    <property type="term" value="F:GTP binding"/>
    <property type="evidence" value="ECO:0007669"/>
    <property type="project" value="UniProtKB-UniRule"/>
</dbReference>
<dbReference type="GO" id="GO:0003924">
    <property type="term" value="F:GTPase activity"/>
    <property type="evidence" value="ECO:0007669"/>
    <property type="project" value="UniProtKB-UniRule"/>
</dbReference>
<dbReference type="GO" id="GO:0097216">
    <property type="term" value="F:guanosine tetraphosphate binding"/>
    <property type="evidence" value="ECO:0007669"/>
    <property type="project" value="UniProtKB-ARBA"/>
</dbReference>
<dbReference type="GO" id="GO:0043022">
    <property type="term" value="F:ribosome binding"/>
    <property type="evidence" value="ECO:0000318"/>
    <property type="project" value="GO_Central"/>
</dbReference>
<dbReference type="GO" id="GO:0003746">
    <property type="term" value="F:translation elongation factor activity"/>
    <property type="evidence" value="ECO:0007669"/>
    <property type="project" value="UniProtKB-UniRule"/>
</dbReference>
<dbReference type="GO" id="GO:0045727">
    <property type="term" value="P:positive regulation of translation"/>
    <property type="evidence" value="ECO:0000318"/>
    <property type="project" value="GO_Central"/>
</dbReference>
<dbReference type="CDD" id="cd03699">
    <property type="entry name" value="EF4_II"/>
    <property type="match status" value="1"/>
</dbReference>
<dbReference type="CDD" id="cd16260">
    <property type="entry name" value="EF4_III"/>
    <property type="match status" value="1"/>
</dbReference>
<dbReference type="CDD" id="cd01890">
    <property type="entry name" value="LepA"/>
    <property type="match status" value="1"/>
</dbReference>
<dbReference type="CDD" id="cd03709">
    <property type="entry name" value="lepA_C"/>
    <property type="match status" value="1"/>
</dbReference>
<dbReference type="FunFam" id="3.40.50.300:FF:000078">
    <property type="entry name" value="Elongation factor 4"/>
    <property type="match status" value="1"/>
</dbReference>
<dbReference type="FunFam" id="2.40.30.10:FF:000015">
    <property type="entry name" value="Translation factor GUF1, mitochondrial"/>
    <property type="match status" value="1"/>
</dbReference>
<dbReference type="FunFam" id="3.30.70.240:FF:000007">
    <property type="entry name" value="Translation factor GUF1, mitochondrial"/>
    <property type="match status" value="1"/>
</dbReference>
<dbReference type="FunFam" id="3.30.70.2570:FF:000001">
    <property type="entry name" value="Translation factor GUF1, mitochondrial"/>
    <property type="match status" value="1"/>
</dbReference>
<dbReference type="FunFam" id="3.30.70.870:FF:000004">
    <property type="entry name" value="Translation factor GUF1, mitochondrial"/>
    <property type="match status" value="1"/>
</dbReference>
<dbReference type="Gene3D" id="3.30.70.240">
    <property type="match status" value="1"/>
</dbReference>
<dbReference type="Gene3D" id="3.30.70.2570">
    <property type="entry name" value="Elongation factor 4, C-terminal domain"/>
    <property type="match status" value="1"/>
</dbReference>
<dbReference type="Gene3D" id="3.30.70.870">
    <property type="entry name" value="Elongation Factor G (Translational Gtpase), domain 3"/>
    <property type="match status" value="1"/>
</dbReference>
<dbReference type="Gene3D" id="3.40.50.300">
    <property type="entry name" value="P-loop containing nucleotide triphosphate hydrolases"/>
    <property type="match status" value="1"/>
</dbReference>
<dbReference type="Gene3D" id="2.40.30.10">
    <property type="entry name" value="Translation factors"/>
    <property type="match status" value="1"/>
</dbReference>
<dbReference type="HAMAP" id="MF_00071">
    <property type="entry name" value="LepA"/>
    <property type="match status" value="1"/>
</dbReference>
<dbReference type="InterPro" id="IPR006297">
    <property type="entry name" value="EF-4"/>
</dbReference>
<dbReference type="InterPro" id="IPR035647">
    <property type="entry name" value="EFG_III/V"/>
</dbReference>
<dbReference type="InterPro" id="IPR000640">
    <property type="entry name" value="EFG_V-like"/>
</dbReference>
<dbReference type="InterPro" id="IPR004161">
    <property type="entry name" value="EFTu-like_2"/>
</dbReference>
<dbReference type="InterPro" id="IPR031157">
    <property type="entry name" value="G_TR_CS"/>
</dbReference>
<dbReference type="InterPro" id="IPR038363">
    <property type="entry name" value="LepA_C_sf"/>
</dbReference>
<dbReference type="InterPro" id="IPR013842">
    <property type="entry name" value="LepA_CTD"/>
</dbReference>
<dbReference type="InterPro" id="IPR035654">
    <property type="entry name" value="LepA_IV"/>
</dbReference>
<dbReference type="InterPro" id="IPR027417">
    <property type="entry name" value="P-loop_NTPase"/>
</dbReference>
<dbReference type="InterPro" id="IPR005225">
    <property type="entry name" value="Small_GTP-bd"/>
</dbReference>
<dbReference type="InterPro" id="IPR000795">
    <property type="entry name" value="T_Tr_GTP-bd_dom"/>
</dbReference>
<dbReference type="InterPro" id="IPR009000">
    <property type="entry name" value="Transl_B-barrel_sf"/>
</dbReference>
<dbReference type="NCBIfam" id="TIGR01393">
    <property type="entry name" value="lepA"/>
    <property type="match status" value="1"/>
</dbReference>
<dbReference type="NCBIfam" id="TIGR00231">
    <property type="entry name" value="small_GTP"/>
    <property type="match status" value="1"/>
</dbReference>
<dbReference type="PANTHER" id="PTHR43512:SF4">
    <property type="entry name" value="TRANSLATION FACTOR GUF1 HOMOLOG, CHLOROPLASTIC"/>
    <property type="match status" value="1"/>
</dbReference>
<dbReference type="PANTHER" id="PTHR43512">
    <property type="entry name" value="TRANSLATION FACTOR GUF1-RELATED"/>
    <property type="match status" value="1"/>
</dbReference>
<dbReference type="Pfam" id="PF00679">
    <property type="entry name" value="EFG_C"/>
    <property type="match status" value="1"/>
</dbReference>
<dbReference type="Pfam" id="PF00009">
    <property type="entry name" value="GTP_EFTU"/>
    <property type="match status" value="1"/>
</dbReference>
<dbReference type="Pfam" id="PF03144">
    <property type="entry name" value="GTP_EFTU_D2"/>
    <property type="match status" value="1"/>
</dbReference>
<dbReference type="Pfam" id="PF06421">
    <property type="entry name" value="LepA_C"/>
    <property type="match status" value="1"/>
</dbReference>
<dbReference type="PRINTS" id="PR00315">
    <property type="entry name" value="ELONGATNFCT"/>
</dbReference>
<dbReference type="SUPFAM" id="SSF54980">
    <property type="entry name" value="EF-G C-terminal domain-like"/>
    <property type="match status" value="2"/>
</dbReference>
<dbReference type="SUPFAM" id="SSF52540">
    <property type="entry name" value="P-loop containing nucleoside triphosphate hydrolases"/>
    <property type="match status" value="1"/>
</dbReference>
<dbReference type="SUPFAM" id="SSF50447">
    <property type="entry name" value="Translation proteins"/>
    <property type="match status" value="1"/>
</dbReference>
<dbReference type="PROSITE" id="PS00301">
    <property type="entry name" value="G_TR_1"/>
    <property type="match status" value="1"/>
</dbReference>
<dbReference type="PROSITE" id="PS51722">
    <property type="entry name" value="G_TR_2"/>
    <property type="match status" value="1"/>
</dbReference>
<feature type="chain" id="PRO_0000176267" description="Elongation factor 4">
    <location>
        <begin position="1"/>
        <end position="602"/>
    </location>
</feature>
<feature type="domain" description="tr-type G">
    <location>
        <begin position="7"/>
        <end position="189"/>
    </location>
</feature>
<feature type="binding site" evidence="1">
    <location>
        <begin position="19"/>
        <end position="24"/>
    </location>
    <ligand>
        <name>GTP</name>
        <dbReference type="ChEBI" id="CHEBI:37565"/>
    </ligand>
</feature>
<feature type="binding site" evidence="1">
    <location>
        <begin position="136"/>
        <end position="139"/>
    </location>
    <ligand>
        <name>GTP</name>
        <dbReference type="ChEBI" id="CHEBI:37565"/>
    </ligand>
</feature>
<protein>
    <recommendedName>
        <fullName evidence="1">Elongation factor 4</fullName>
        <shortName evidence="1">EF-4</shortName>
        <ecNumber evidence="1">3.6.5.n1</ecNumber>
    </recommendedName>
    <alternativeName>
        <fullName evidence="1">Ribosomal back-translocase LepA</fullName>
    </alternativeName>
</protein>
<gene>
    <name evidence="1" type="primary">lepA</name>
    <name type="ordered locus">CBU_1505</name>
</gene>
<accession>Q83BK3</accession>
<organism>
    <name type="scientific">Coxiella burnetii (strain RSA 493 / Nine Mile phase I)</name>
    <dbReference type="NCBI Taxonomy" id="227377"/>
    <lineage>
        <taxon>Bacteria</taxon>
        <taxon>Pseudomonadati</taxon>
        <taxon>Pseudomonadota</taxon>
        <taxon>Gammaproteobacteria</taxon>
        <taxon>Legionellales</taxon>
        <taxon>Coxiellaceae</taxon>
        <taxon>Coxiella</taxon>
    </lineage>
</organism>
<proteinExistence type="inferred from homology"/>
<reference key="1">
    <citation type="journal article" date="2003" name="Proc. Natl. Acad. Sci. U.S.A.">
        <title>Complete genome sequence of the Q-fever pathogen, Coxiella burnetii.</title>
        <authorList>
            <person name="Seshadri R."/>
            <person name="Paulsen I.T."/>
            <person name="Eisen J.A."/>
            <person name="Read T.D."/>
            <person name="Nelson K.E."/>
            <person name="Nelson W.C."/>
            <person name="Ward N.L."/>
            <person name="Tettelin H."/>
            <person name="Davidsen T.M."/>
            <person name="Beanan M.J."/>
            <person name="DeBoy R.T."/>
            <person name="Daugherty S.C."/>
            <person name="Brinkac L.M."/>
            <person name="Madupu R."/>
            <person name="Dodson R.J."/>
            <person name="Khouri H.M."/>
            <person name="Lee K.H."/>
            <person name="Carty H.A."/>
            <person name="Scanlan D."/>
            <person name="Heinzen R.A."/>
            <person name="Thompson H.A."/>
            <person name="Samuel J.E."/>
            <person name="Fraser C.M."/>
            <person name="Heidelberg J.F."/>
        </authorList>
    </citation>
    <scope>NUCLEOTIDE SEQUENCE [LARGE SCALE GENOMIC DNA]</scope>
    <source>
        <strain>RSA 493 / Nine Mile phase I</strain>
    </source>
</reference>
<evidence type="ECO:0000255" key="1">
    <source>
        <dbReference type="HAMAP-Rule" id="MF_00071"/>
    </source>
</evidence>
<evidence type="ECO:0000305" key="2"/>
<name>LEPA_COXBU</name>